<organism>
    <name type="scientific">Ralstonia pickettii (strain 12J)</name>
    <dbReference type="NCBI Taxonomy" id="402626"/>
    <lineage>
        <taxon>Bacteria</taxon>
        <taxon>Pseudomonadati</taxon>
        <taxon>Pseudomonadota</taxon>
        <taxon>Betaproteobacteria</taxon>
        <taxon>Burkholderiales</taxon>
        <taxon>Burkholderiaceae</taxon>
        <taxon>Ralstonia</taxon>
    </lineage>
</organism>
<keyword id="KW-0963">Cytoplasm</keyword>
<keyword id="KW-0227">DNA damage</keyword>
<keyword id="KW-0233">DNA recombination</keyword>
<keyword id="KW-0234">DNA repair</keyword>
<keyword id="KW-0238">DNA-binding</keyword>
<keyword id="KW-0255">Endonuclease</keyword>
<keyword id="KW-0378">Hydrolase</keyword>
<keyword id="KW-0460">Magnesium</keyword>
<keyword id="KW-0479">Metal-binding</keyword>
<keyword id="KW-0540">Nuclease</keyword>
<feature type="chain" id="PRO_1000090551" description="Crossover junction endodeoxyribonuclease RuvC">
    <location>
        <begin position="1"/>
        <end position="181"/>
    </location>
</feature>
<feature type="active site" evidence="1">
    <location>
        <position position="7"/>
    </location>
</feature>
<feature type="active site" evidence="1">
    <location>
        <position position="67"/>
    </location>
</feature>
<feature type="active site" evidence="1">
    <location>
        <position position="139"/>
    </location>
</feature>
<feature type="binding site" evidence="1">
    <location>
        <position position="7"/>
    </location>
    <ligand>
        <name>Mg(2+)</name>
        <dbReference type="ChEBI" id="CHEBI:18420"/>
        <label>1</label>
    </ligand>
</feature>
<feature type="binding site" evidence="1">
    <location>
        <position position="67"/>
    </location>
    <ligand>
        <name>Mg(2+)</name>
        <dbReference type="ChEBI" id="CHEBI:18420"/>
        <label>2</label>
    </ligand>
</feature>
<feature type="binding site" evidence="1">
    <location>
        <position position="139"/>
    </location>
    <ligand>
        <name>Mg(2+)</name>
        <dbReference type="ChEBI" id="CHEBI:18420"/>
        <label>1</label>
    </ligand>
</feature>
<accession>B2UFL4</accession>
<comment type="function">
    <text evidence="1">The RuvA-RuvB-RuvC complex processes Holliday junction (HJ) DNA during genetic recombination and DNA repair. Endonuclease that resolves HJ intermediates. Cleaves cruciform DNA by making single-stranded nicks across the HJ at symmetrical positions within the homologous arms, yielding a 5'-phosphate and a 3'-hydroxyl group; requires a central core of homology in the junction. The consensus cleavage sequence is 5'-(A/T)TT(C/G)-3'. Cleavage occurs on the 3'-side of the TT dinucleotide at the point of strand exchange. HJ branch migration catalyzed by RuvA-RuvB allows RuvC to scan DNA until it finds its consensus sequence, where it cleaves and resolves the cruciform DNA.</text>
</comment>
<comment type="catalytic activity">
    <reaction evidence="1">
        <text>Endonucleolytic cleavage at a junction such as a reciprocal single-stranded crossover between two homologous DNA duplexes (Holliday junction).</text>
        <dbReference type="EC" id="3.1.21.10"/>
    </reaction>
</comment>
<comment type="cofactor">
    <cofactor evidence="1">
        <name>Mg(2+)</name>
        <dbReference type="ChEBI" id="CHEBI:18420"/>
    </cofactor>
    <text evidence="1">Binds 2 Mg(2+) ion per subunit.</text>
</comment>
<comment type="subunit">
    <text evidence="1">Homodimer which binds Holliday junction (HJ) DNA. The HJ becomes 2-fold symmetrical on binding to RuvC with unstacked arms; it has a different conformation from HJ DNA in complex with RuvA. In the full resolvosome a probable DNA-RuvA(4)-RuvB(12)-RuvC(2) complex forms which resolves the HJ.</text>
</comment>
<comment type="subcellular location">
    <subcellularLocation>
        <location evidence="1">Cytoplasm</location>
    </subcellularLocation>
</comment>
<comment type="similarity">
    <text evidence="1">Belongs to the RuvC family.</text>
</comment>
<reference key="1">
    <citation type="submission" date="2008-05" db="EMBL/GenBank/DDBJ databases">
        <title>Complete sequence of chromosome 1 of Ralstonia pickettii 12J.</title>
        <authorList>
            <person name="Lucas S."/>
            <person name="Copeland A."/>
            <person name="Lapidus A."/>
            <person name="Glavina del Rio T."/>
            <person name="Dalin E."/>
            <person name="Tice H."/>
            <person name="Bruce D."/>
            <person name="Goodwin L."/>
            <person name="Pitluck S."/>
            <person name="Meincke L."/>
            <person name="Brettin T."/>
            <person name="Detter J.C."/>
            <person name="Han C."/>
            <person name="Kuske C.R."/>
            <person name="Schmutz J."/>
            <person name="Larimer F."/>
            <person name="Land M."/>
            <person name="Hauser L."/>
            <person name="Kyrpides N."/>
            <person name="Mikhailova N."/>
            <person name="Marsh T."/>
            <person name="Richardson P."/>
        </authorList>
    </citation>
    <scope>NUCLEOTIDE SEQUENCE [LARGE SCALE GENOMIC DNA]</scope>
    <source>
        <strain>12J</strain>
    </source>
</reference>
<evidence type="ECO:0000255" key="1">
    <source>
        <dbReference type="HAMAP-Rule" id="MF_00034"/>
    </source>
</evidence>
<dbReference type="EC" id="3.1.21.10" evidence="1"/>
<dbReference type="EMBL" id="CP001068">
    <property type="protein sequence ID" value="ACD25537.1"/>
    <property type="molecule type" value="Genomic_DNA"/>
</dbReference>
<dbReference type="SMR" id="B2UFL4"/>
<dbReference type="STRING" id="402626.Rpic_0379"/>
<dbReference type="KEGG" id="rpi:Rpic_0379"/>
<dbReference type="eggNOG" id="COG0817">
    <property type="taxonomic scope" value="Bacteria"/>
</dbReference>
<dbReference type="HOGENOM" id="CLU_091257_3_1_4"/>
<dbReference type="GO" id="GO:0005737">
    <property type="term" value="C:cytoplasm"/>
    <property type="evidence" value="ECO:0007669"/>
    <property type="project" value="UniProtKB-SubCell"/>
</dbReference>
<dbReference type="GO" id="GO:0048476">
    <property type="term" value="C:Holliday junction resolvase complex"/>
    <property type="evidence" value="ECO:0007669"/>
    <property type="project" value="UniProtKB-UniRule"/>
</dbReference>
<dbReference type="GO" id="GO:0008821">
    <property type="term" value="F:crossover junction DNA endonuclease activity"/>
    <property type="evidence" value="ECO:0007669"/>
    <property type="project" value="UniProtKB-UniRule"/>
</dbReference>
<dbReference type="GO" id="GO:0003677">
    <property type="term" value="F:DNA binding"/>
    <property type="evidence" value="ECO:0007669"/>
    <property type="project" value="UniProtKB-KW"/>
</dbReference>
<dbReference type="GO" id="GO:0000287">
    <property type="term" value="F:magnesium ion binding"/>
    <property type="evidence" value="ECO:0007669"/>
    <property type="project" value="UniProtKB-UniRule"/>
</dbReference>
<dbReference type="GO" id="GO:0006310">
    <property type="term" value="P:DNA recombination"/>
    <property type="evidence" value="ECO:0007669"/>
    <property type="project" value="UniProtKB-UniRule"/>
</dbReference>
<dbReference type="GO" id="GO:0006281">
    <property type="term" value="P:DNA repair"/>
    <property type="evidence" value="ECO:0007669"/>
    <property type="project" value="UniProtKB-UniRule"/>
</dbReference>
<dbReference type="CDD" id="cd16962">
    <property type="entry name" value="RuvC"/>
    <property type="match status" value="1"/>
</dbReference>
<dbReference type="FunFam" id="3.30.420.10:FF:000002">
    <property type="entry name" value="Crossover junction endodeoxyribonuclease RuvC"/>
    <property type="match status" value="1"/>
</dbReference>
<dbReference type="Gene3D" id="3.30.420.10">
    <property type="entry name" value="Ribonuclease H-like superfamily/Ribonuclease H"/>
    <property type="match status" value="1"/>
</dbReference>
<dbReference type="HAMAP" id="MF_00034">
    <property type="entry name" value="RuvC"/>
    <property type="match status" value="1"/>
</dbReference>
<dbReference type="InterPro" id="IPR012337">
    <property type="entry name" value="RNaseH-like_sf"/>
</dbReference>
<dbReference type="InterPro" id="IPR036397">
    <property type="entry name" value="RNaseH_sf"/>
</dbReference>
<dbReference type="InterPro" id="IPR020563">
    <property type="entry name" value="X-over_junc_endoDNase_Mg_BS"/>
</dbReference>
<dbReference type="InterPro" id="IPR002176">
    <property type="entry name" value="X-over_junc_endoDNase_RuvC"/>
</dbReference>
<dbReference type="NCBIfam" id="TIGR00228">
    <property type="entry name" value="ruvC"/>
    <property type="match status" value="1"/>
</dbReference>
<dbReference type="PANTHER" id="PTHR30194">
    <property type="entry name" value="CROSSOVER JUNCTION ENDODEOXYRIBONUCLEASE RUVC"/>
    <property type="match status" value="1"/>
</dbReference>
<dbReference type="PANTHER" id="PTHR30194:SF3">
    <property type="entry name" value="CROSSOVER JUNCTION ENDODEOXYRIBONUCLEASE RUVC"/>
    <property type="match status" value="1"/>
</dbReference>
<dbReference type="Pfam" id="PF02075">
    <property type="entry name" value="RuvC"/>
    <property type="match status" value="1"/>
</dbReference>
<dbReference type="PRINTS" id="PR00696">
    <property type="entry name" value="RSOLVASERUVC"/>
</dbReference>
<dbReference type="SUPFAM" id="SSF53098">
    <property type="entry name" value="Ribonuclease H-like"/>
    <property type="match status" value="1"/>
</dbReference>
<dbReference type="PROSITE" id="PS01321">
    <property type="entry name" value="RUVC"/>
    <property type="match status" value="1"/>
</dbReference>
<gene>
    <name evidence="1" type="primary">ruvC</name>
    <name type="ordered locus">Rpic_0379</name>
</gene>
<sequence>MRILGIDPGLRTTGFGVLERHGHKLVYVASGTIKSNGNADLPSRLKTLYDGVSELVSTYRPDCASIEKVFVNVNPQSTLLLGQARGAVICGLMSGNLPVFEYTALQLKQAVVGYGRANKDQVQEMVVRLLNLEGKPGADASDALGVAICHAHGGETLAAMAGLAPQLAQKGLRVRRGRLVG</sequence>
<name>RUVC_RALPJ</name>
<proteinExistence type="inferred from homology"/>
<protein>
    <recommendedName>
        <fullName evidence="1">Crossover junction endodeoxyribonuclease RuvC</fullName>
        <ecNumber evidence="1">3.1.21.10</ecNumber>
    </recommendedName>
    <alternativeName>
        <fullName evidence="1">Holliday junction nuclease RuvC</fullName>
    </alternativeName>
    <alternativeName>
        <fullName evidence="1">Holliday junction resolvase RuvC</fullName>
    </alternativeName>
</protein>